<organism>
    <name type="scientific">Salinispora tropica (strain ATCC BAA-916 / DSM 44818 / JCM 13857 / NBRC 105044 / CNB-440)</name>
    <dbReference type="NCBI Taxonomy" id="369723"/>
    <lineage>
        <taxon>Bacteria</taxon>
        <taxon>Bacillati</taxon>
        <taxon>Actinomycetota</taxon>
        <taxon>Actinomycetes</taxon>
        <taxon>Micromonosporales</taxon>
        <taxon>Micromonosporaceae</taxon>
        <taxon>Salinispora</taxon>
    </lineage>
</organism>
<name>CBID_SALTO</name>
<comment type="function">
    <text evidence="1">Catalyzes the methylation of C-1 in cobalt-precorrin-5B to form cobalt-precorrin-6A.</text>
</comment>
<comment type="catalytic activity">
    <reaction evidence="1">
        <text>Co-precorrin-5B + S-adenosyl-L-methionine = Co-precorrin-6A + S-adenosyl-L-homocysteine</text>
        <dbReference type="Rhea" id="RHEA:26285"/>
        <dbReference type="ChEBI" id="CHEBI:57856"/>
        <dbReference type="ChEBI" id="CHEBI:59789"/>
        <dbReference type="ChEBI" id="CHEBI:60063"/>
        <dbReference type="ChEBI" id="CHEBI:60064"/>
        <dbReference type="EC" id="2.1.1.195"/>
    </reaction>
</comment>
<comment type="pathway">
    <text evidence="1">Cofactor biosynthesis; adenosylcobalamin biosynthesis; cob(II)yrinate a,c-diamide from sirohydrochlorin (anaerobic route): step 6/10.</text>
</comment>
<comment type="similarity">
    <text evidence="1">Belongs to the CbiD family.</text>
</comment>
<reference key="1">
    <citation type="journal article" date="2007" name="Proc. Natl. Acad. Sci. U.S.A.">
        <title>Genome sequencing reveals complex secondary metabolome in the marine actinomycete Salinispora tropica.</title>
        <authorList>
            <person name="Udwary D.W."/>
            <person name="Zeigler L."/>
            <person name="Asolkar R.N."/>
            <person name="Singan V."/>
            <person name="Lapidus A."/>
            <person name="Fenical W."/>
            <person name="Jensen P.R."/>
            <person name="Moore B.S."/>
        </authorList>
    </citation>
    <scope>NUCLEOTIDE SEQUENCE [LARGE SCALE GENOMIC DNA]</scope>
    <source>
        <strain>ATCC BAA-916 / DSM 44818 / JCM 13857 / NBRC 105044 / CNB-440</strain>
    </source>
</reference>
<evidence type="ECO:0000255" key="1">
    <source>
        <dbReference type="HAMAP-Rule" id="MF_00787"/>
    </source>
</evidence>
<feature type="chain" id="PRO_1000083597" description="Cobalt-precorrin-5B C(1)-methyltransferase">
    <location>
        <begin position="1"/>
        <end position="380"/>
    </location>
</feature>
<proteinExistence type="inferred from homology"/>
<protein>
    <recommendedName>
        <fullName evidence="1">Cobalt-precorrin-5B C(1)-methyltransferase</fullName>
        <ecNumber evidence="1">2.1.1.195</ecNumber>
    </recommendedName>
    <alternativeName>
        <fullName evidence="1">Cobalt-precorrin-6A synthase</fullName>
    </alternativeName>
</protein>
<gene>
    <name evidence="1" type="primary">cbiD</name>
    <name type="ordered locus">Strop_2522</name>
</gene>
<dbReference type="EC" id="2.1.1.195" evidence="1"/>
<dbReference type="EMBL" id="CP000667">
    <property type="protein sequence ID" value="ABP54967.1"/>
    <property type="molecule type" value="Genomic_DNA"/>
</dbReference>
<dbReference type="RefSeq" id="WP_012013748.1">
    <property type="nucleotide sequence ID" value="NC_009380.1"/>
</dbReference>
<dbReference type="SMR" id="A4X7W7"/>
<dbReference type="STRING" id="369723.Strop_2522"/>
<dbReference type="KEGG" id="stp:Strop_2522"/>
<dbReference type="PATRIC" id="fig|369723.5.peg.2599"/>
<dbReference type="eggNOG" id="COG1903">
    <property type="taxonomic scope" value="Bacteria"/>
</dbReference>
<dbReference type="HOGENOM" id="CLU_041273_0_0_11"/>
<dbReference type="UniPathway" id="UPA00148">
    <property type="reaction ID" value="UER00227"/>
</dbReference>
<dbReference type="Proteomes" id="UP000000235">
    <property type="component" value="Chromosome"/>
</dbReference>
<dbReference type="GO" id="GO:0043780">
    <property type="term" value="F:cobalt-precorrin-5B C1-methyltransferase activity"/>
    <property type="evidence" value="ECO:0007669"/>
    <property type="project" value="RHEA"/>
</dbReference>
<dbReference type="GO" id="GO:0019251">
    <property type="term" value="P:anaerobic cobalamin biosynthetic process"/>
    <property type="evidence" value="ECO:0007669"/>
    <property type="project" value="UniProtKB-UniRule"/>
</dbReference>
<dbReference type="GO" id="GO:0032259">
    <property type="term" value="P:methylation"/>
    <property type="evidence" value="ECO:0007669"/>
    <property type="project" value="UniProtKB-KW"/>
</dbReference>
<dbReference type="Gene3D" id="3.30.2110.10">
    <property type="entry name" value="CbiD-like"/>
    <property type="match status" value="1"/>
</dbReference>
<dbReference type="HAMAP" id="MF_00787">
    <property type="entry name" value="CbiD"/>
    <property type="match status" value="1"/>
</dbReference>
<dbReference type="InterPro" id="IPR002748">
    <property type="entry name" value="CbiD"/>
</dbReference>
<dbReference type="InterPro" id="IPR036074">
    <property type="entry name" value="CbiD_sf"/>
</dbReference>
<dbReference type="NCBIfam" id="TIGR00312">
    <property type="entry name" value="cbiD"/>
    <property type="match status" value="1"/>
</dbReference>
<dbReference type="NCBIfam" id="NF000849">
    <property type="entry name" value="PRK00075.1-1"/>
    <property type="match status" value="1"/>
</dbReference>
<dbReference type="PANTHER" id="PTHR35863">
    <property type="entry name" value="COBALT-PRECORRIN-5B C(1)-METHYLTRANSFERASE"/>
    <property type="match status" value="1"/>
</dbReference>
<dbReference type="PANTHER" id="PTHR35863:SF1">
    <property type="entry name" value="COBALT-PRECORRIN-5B C(1)-METHYLTRANSFERASE"/>
    <property type="match status" value="1"/>
</dbReference>
<dbReference type="Pfam" id="PF01888">
    <property type="entry name" value="CbiD"/>
    <property type="match status" value="1"/>
</dbReference>
<dbReference type="PIRSF" id="PIRSF026782">
    <property type="entry name" value="CbiD"/>
    <property type="match status" value="1"/>
</dbReference>
<dbReference type="SUPFAM" id="SSF111342">
    <property type="entry name" value="CbiD-like"/>
    <property type="match status" value="1"/>
</dbReference>
<sequence>MTYDLPPLREPDLPRTAKVRPVALRTGWTTGACATAATKAALTALVTGVSPEQVEIGLPAGRRVCFPVARCDRTADGVEAVVVKDAGDDPDVTHGAELTATVGWRWVPGLALEGGPGVGTVTKPGLGLTVGGPAINDTPRRMIGEAVAEVVDLAVVGVRVVISVPRGEIMARKTTNRRLGIIGGISILGTTGVVRPFSTASWRASVVQAVQVAAAQGEQTVVLCTGGRTERAARELLPELPEVCFVEVGDFTGAAVTAAVTHGLSGVAFVGMAGKLAKLAAGVLMTHYTRSKVDLSLLGAVTVEAGGSADLAAAVTAANTGRHAYELWEAAGLLGPAGDLLCRRVRTVLRRFAGDAVTVDVAMVDFAGARRVAASGRWSQ</sequence>
<keyword id="KW-0169">Cobalamin biosynthesis</keyword>
<keyword id="KW-0489">Methyltransferase</keyword>
<keyword id="KW-1185">Reference proteome</keyword>
<keyword id="KW-0949">S-adenosyl-L-methionine</keyword>
<keyword id="KW-0808">Transferase</keyword>
<accession>A4X7W7</accession>